<organism>
    <name type="scientific">Haemophilus influenzae (strain ATCC 51907 / DSM 11121 / KW20 / Rd)</name>
    <dbReference type="NCBI Taxonomy" id="71421"/>
    <lineage>
        <taxon>Bacteria</taxon>
        <taxon>Pseudomonadati</taxon>
        <taxon>Pseudomonadota</taxon>
        <taxon>Gammaproteobacteria</taxon>
        <taxon>Pasteurellales</taxon>
        <taxon>Pasteurellaceae</taxon>
        <taxon>Haemophilus</taxon>
    </lineage>
</organism>
<protein>
    <recommendedName>
        <fullName>Uncharacterized ABC transporter ATP-binding protein HI_0036</fullName>
    </recommendedName>
</protein>
<gene>
    <name type="ordered locus">HI_0036</name>
</gene>
<sequence length="592" mass="67904">MDYSQEAITSLIWILQTLAITSVVFSFGIFLLVRFTQWGKQFWMFAGGYLSPKRSIKPILFFLLIVAMTLLSVRISLVNSEWYKNMYTSLQEFNEHVFWQQMGLFCVIAASSVSAALVSYYLEQRFVINWIEWLNEQLVNKWMAHRAYYKTQYLSENLDNPDQRIQQDVQSYVKTTLSLSTGVIDAVTSMISYTILLWGLAGPMIVLGVEIPHMMVFLVFGYVIFTTLIAFWLGRPLISLNFINERLNANYRYSLIRIKEYAESIAFYAGEKVEKNQLYQQFNAVIHNMWVIIFRTLKFSGFNLVVSQISVVFPLLIQVGRYFEKQIKLGDLMQTLQVFGQLHANLSFFRSTYDNFASYKATLDRLTGFCYAIEKANNKSQTQIHNHPTDVIFKNLSIQNPLGHTLIKHLNITLPQGTSLLIQGKSGAGKTTLLRTIAGLWSYAEGEINCPTHNQLFLSQKPYVPQGNLMSALAYPNNADNISHTQAVEILNKVQLGHLAEQLEKEQDWTRILSLGEQQRLAFARLILHKPAVAFLDEATASMDEGLEFSMYQLLQQELPQTTIISVGHRSTLKTLHQQQLILQDKGQWQVL</sequence>
<proteinExistence type="inferred from homology"/>
<keyword id="KW-0067">ATP-binding</keyword>
<keyword id="KW-0997">Cell inner membrane</keyword>
<keyword id="KW-1003">Cell membrane</keyword>
<keyword id="KW-0472">Membrane</keyword>
<keyword id="KW-0547">Nucleotide-binding</keyword>
<keyword id="KW-1185">Reference proteome</keyword>
<keyword id="KW-0812">Transmembrane</keyword>
<keyword id="KW-1133">Transmembrane helix</keyword>
<keyword id="KW-0813">Transport</keyword>
<evidence type="ECO:0000255" key="1">
    <source>
        <dbReference type="PROSITE-ProRule" id="PRU00434"/>
    </source>
</evidence>
<evidence type="ECO:0000255" key="2">
    <source>
        <dbReference type="PROSITE-ProRule" id="PRU00441"/>
    </source>
</evidence>
<evidence type="ECO:0000305" key="3"/>
<dbReference type="EMBL" id="L42023">
    <property type="protein sequence ID" value="AAC21714.1"/>
    <property type="molecule type" value="Genomic_DNA"/>
</dbReference>
<dbReference type="PIR" id="D64044">
    <property type="entry name" value="D64044"/>
</dbReference>
<dbReference type="RefSeq" id="NP_438209.1">
    <property type="nucleotide sequence ID" value="NC_000907.1"/>
</dbReference>
<dbReference type="SMR" id="Q57335"/>
<dbReference type="STRING" id="71421.HI_0036"/>
<dbReference type="EnsemblBacteria" id="AAC21714">
    <property type="protein sequence ID" value="AAC21714"/>
    <property type="gene ID" value="HI_0036"/>
</dbReference>
<dbReference type="KEGG" id="hin:HI_0036"/>
<dbReference type="PATRIC" id="fig|71421.8.peg.36"/>
<dbReference type="eggNOG" id="COG4178">
    <property type="taxonomic scope" value="Bacteria"/>
</dbReference>
<dbReference type="HOGENOM" id="CLU_007587_6_2_6"/>
<dbReference type="OrthoDB" id="9810134at2"/>
<dbReference type="PhylomeDB" id="Q57335"/>
<dbReference type="BioCyc" id="HINF71421:G1GJ1-36-MONOMER"/>
<dbReference type="Proteomes" id="UP000000579">
    <property type="component" value="Chromosome"/>
</dbReference>
<dbReference type="GO" id="GO:0005886">
    <property type="term" value="C:plasma membrane"/>
    <property type="evidence" value="ECO:0000318"/>
    <property type="project" value="GO_Central"/>
</dbReference>
<dbReference type="GO" id="GO:0140359">
    <property type="term" value="F:ABC-type transporter activity"/>
    <property type="evidence" value="ECO:0007669"/>
    <property type="project" value="InterPro"/>
</dbReference>
<dbReference type="GO" id="GO:0005524">
    <property type="term" value="F:ATP binding"/>
    <property type="evidence" value="ECO:0007669"/>
    <property type="project" value="UniProtKB-KW"/>
</dbReference>
<dbReference type="GO" id="GO:0016887">
    <property type="term" value="F:ATP hydrolysis activity"/>
    <property type="evidence" value="ECO:0007669"/>
    <property type="project" value="InterPro"/>
</dbReference>
<dbReference type="CDD" id="cd03223">
    <property type="entry name" value="ABCD_peroxisomal_ALDP"/>
    <property type="match status" value="1"/>
</dbReference>
<dbReference type="Gene3D" id="1.20.1560.10">
    <property type="entry name" value="ABC transporter type 1, transmembrane domain"/>
    <property type="match status" value="1"/>
</dbReference>
<dbReference type="Gene3D" id="3.40.50.300">
    <property type="entry name" value="P-loop containing nucleotide triphosphate hydrolases"/>
    <property type="match status" value="1"/>
</dbReference>
<dbReference type="InterPro" id="IPR003593">
    <property type="entry name" value="AAA+_ATPase"/>
</dbReference>
<dbReference type="InterPro" id="IPR011527">
    <property type="entry name" value="ABC1_TM_dom"/>
</dbReference>
<dbReference type="InterPro" id="IPR036640">
    <property type="entry name" value="ABC1_TM_sf"/>
</dbReference>
<dbReference type="InterPro" id="IPR003439">
    <property type="entry name" value="ABC_transporter-like_ATP-bd"/>
</dbReference>
<dbReference type="InterPro" id="IPR017871">
    <property type="entry name" value="ABC_transporter-like_CS"/>
</dbReference>
<dbReference type="InterPro" id="IPR050835">
    <property type="entry name" value="ABC_transporter_sub-D"/>
</dbReference>
<dbReference type="InterPro" id="IPR027417">
    <property type="entry name" value="P-loop_NTPase"/>
</dbReference>
<dbReference type="PANTHER" id="PTHR11384">
    <property type="entry name" value="ATP-BINDING CASSETTE, SUB-FAMILY D MEMBER"/>
    <property type="match status" value="1"/>
</dbReference>
<dbReference type="PANTHER" id="PTHR11384:SF59">
    <property type="entry name" value="LYSOSOMAL COBALAMIN TRANSPORTER ABCD4"/>
    <property type="match status" value="1"/>
</dbReference>
<dbReference type="Pfam" id="PF06472">
    <property type="entry name" value="ABC_membrane_2"/>
    <property type="match status" value="1"/>
</dbReference>
<dbReference type="Pfam" id="PF00005">
    <property type="entry name" value="ABC_tran"/>
    <property type="match status" value="1"/>
</dbReference>
<dbReference type="SMART" id="SM00382">
    <property type="entry name" value="AAA"/>
    <property type="match status" value="1"/>
</dbReference>
<dbReference type="SUPFAM" id="SSF90123">
    <property type="entry name" value="ABC transporter transmembrane region"/>
    <property type="match status" value="1"/>
</dbReference>
<dbReference type="SUPFAM" id="SSF52540">
    <property type="entry name" value="P-loop containing nucleoside triphosphate hydrolases"/>
    <property type="match status" value="1"/>
</dbReference>
<dbReference type="PROSITE" id="PS50929">
    <property type="entry name" value="ABC_TM1F"/>
    <property type="match status" value="1"/>
</dbReference>
<dbReference type="PROSITE" id="PS00211">
    <property type="entry name" value="ABC_TRANSPORTER_1"/>
    <property type="match status" value="1"/>
</dbReference>
<dbReference type="PROSITE" id="PS50893">
    <property type="entry name" value="ABC_TRANSPORTER_2"/>
    <property type="match status" value="1"/>
</dbReference>
<accession>Q57335</accession>
<accession>O05006</accession>
<comment type="subcellular location">
    <subcellularLocation>
        <location evidence="3">Cell inner membrane</location>
        <topology evidence="2">Multi-pass membrane protein</topology>
    </subcellularLocation>
</comment>
<comment type="similarity">
    <text evidence="3">Belongs to the ABC transporter superfamily.</text>
</comment>
<reference key="1">
    <citation type="journal article" date="1995" name="Science">
        <title>Whole-genome random sequencing and assembly of Haemophilus influenzae Rd.</title>
        <authorList>
            <person name="Fleischmann R.D."/>
            <person name="Adams M.D."/>
            <person name="White O."/>
            <person name="Clayton R.A."/>
            <person name="Kirkness E.F."/>
            <person name="Kerlavage A.R."/>
            <person name="Bult C.J."/>
            <person name="Tomb J.-F."/>
            <person name="Dougherty B.A."/>
            <person name="Merrick J.M."/>
            <person name="McKenney K."/>
            <person name="Sutton G.G."/>
            <person name="FitzHugh W."/>
            <person name="Fields C.A."/>
            <person name="Gocayne J.D."/>
            <person name="Scott J.D."/>
            <person name="Shirley R."/>
            <person name="Liu L.-I."/>
            <person name="Glodek A."/>
            <person name="Kelley J.M."/>
            <person name="Weidman J.F."/>
            <person name="Phillips C.A."/>
            <person name="Spriggs T."/>
            <person name="Hedblom E."/>
            <person name="Cotton M.D."/>
            <person name="Utterback T.R."/>
            <person name="Hanna M.C."/>
            <person name="Nguyen D.T."/>
            <person name="Saudek D.M."/>
            <person name="Brandon R.C."/>
            <person name="Fine L.D."/>
            <person name="Fritchman J.L."/>
            <person name="Fuhrmann J.L."/>
            <person name="Geoghagen N.S.M."/>
            <person name="Gnehm C.L."/>
            <person name="McDonald L.A."/>
            <person name="Small K.V."/>
            <person name="Fraser C.M."/>
            <person name="Smith H.O."/>
            <person name="Venter J.C."/>
        </authorList>
    </citation>
    <scope>NUCLEOTIDE SEQUENCE [LARGE SCALE GENOMIC DNA]</scope>
    <source>
        <strain>ATCC 51907 / DSM 11121 / KW20 / Rd</strain>
    </source>
</reference>
<feature type="chain" id="PRO_0000093198" description="Uncharacterized ABC transporter ATP-binding protein HI_0036">
    <location>
        <begin position="1"/>
        <end position="592"/>
    </location>
</feature>
<feature type="transmembrane region" description="Helical" evidence="2">
    <location>
        <begin position="12"/>
        <end position="32"/>
    </location>
</feature>
<feature type="transmembrane region" description="Helical" evidence="2">
    <location>
        <begin position="58"/>
        <end position="78"/>
    </location>
</feature>
<feature type="transmembrane region" description="Helical" evidence="2">
    <location>
        <begin position="102"/>
        <end position="122"/>
    </location>
</feature>
<feature type="transmembrane region" description="Helical" evidence="2">
    <location>
        <begin position="191"/>
        <end position="211"/>
    </location>
</feature>
<feature type="transmembrane region" description="Helical" evidence="2">
    <location>
        <begin position="214"/>
        <end position="234"/>
    </location>
</feature>
<feature type="transmembrane region" description="Helical" evidence="2">
    <location>
        <begin position="299"/>
        <end position="319"/>
    </location>
</feature>
<feature type="domain" description="ABC transmembrane type-1" evidence="2">
    <location>
        <begin position="58"/>
        <end position="358"/>
    </location>
</feature>
<feature type="domain" description="ABC transporter" evidence="1">
    <location>
        <begin position="391"/>
        <end position="592"/>
    </location>
</feature>
<feature type="binding site" evidence="1">
    <location>
        <begin position="424"/>
        <end position="431"/>
    </location>
    <ligand>
        <name>ATP</name>
        <dbReference type="ChEBI" id="CHEBI:30616"/>
    </ligand>
</feature>
<name>Y036_HAEIN</name>